<keyword id="KW-0256">Endoplasmic reticulum</keyword>
<keyword id="KW-0328">Glycosyltransferase</keyword>
<keyword id="KW-0472">Membrane</keyword>
<keyword id="KW-1185">Reference proteome</keyword>
<keyword id="KW-0808">Transferase</keyword>
<keyword id="KW-0812">Transmembrane</keyword>
<keyword id="KW-1133">Transmembrane helix</keyword>
<name>ALG2_MOUSE</name>
<reference key="1">
    <citation type="submission" date="2004-01" db="EMBL/GenBank/DDBJ databases">
        <title>Molecular cloning of the mammalian genes which complement the defect of the yeast alg2 mutation.</title>
        <authorList>
            <person name="Takahashi T."/>
            <person name="Ueda M."/>
            <person name="Itoh N."/>
            <person name="Okutomi S."/>
            <person name="Nishikawa Y."/>
        </authorList>
    </citation>
    <scope>NUCLEOTIDE SEQUENCE [MRNA]</scope>
</reference>
<reference key="2">
    <citation type="submission" date="2000-04" db="EMBL/GenBank/DDBJ databases">
        <title>Isolation of full-length cDNA clones from mouse brain cDNA library made by oligo-capping method.</title>
        <authorList>
            <person name="Osada N."/>
            <person name="Kusuda J."/>
            <person name="Tanuma R."/>
            <person name="Ito A."/>
            <person name="Hirata M."/>
            <person name="Sugano S."/>
            <person name="Hashimoto K."/>
        </authorList>
    </citation>
    <scope>NUCLEOTIDE SEQUENCE [LARGE SCALE MRNA]</scope>
    <source>
        <strain>C57BL/6J</strain>
        <tissue>Brain</tissue>
    </source>
</reference>
<reference key="3">
    <citation type="journal article" date="2005" name="Science">
        <title>The transcriptional landscape of the mammalian genome.</title>
        <authorList>
            <person name="Carninci P."/>
            <person name="Kasukawa T."/>
            <person name="Katayama S."/>
            <person name="Gough J."/>
            <person name="Frith M.C."/>
            <person name="Maeda N."/>
            <person name="Oyama R."/>
            <person name="Ravasi T."/>
            <person name="Lenhard B."/>
            <person name="Wells C."/>
            <person name="Kodzius R."/>
            <person name="Shimokawa K."/>
            <person name="Bajic V.B."/>
            <person name="Brenner S.E."/>
            <person name="Batalov S."/>
            <person name="Forrest A.R."/>
            <person name="Zavolan M."/>
            <person name="Davis M.J."/>
            <person name="Wilming L.G."/>
            <person name="Aidinis V."/>
            <person name="Allen J.E."/>
            <person name="Ambesi-Impiombato A."/>
            <person name="Apweiler R."/>
            <person name="Aturaliya R.N."/>
            <person name="Bailey T.L."/>
            <person name="Bansal M."/>
            <person name="Baxter L."/>
            <person name="Beisel K.W."/>
            <person name="Bersano T."/>
            <person name="Bono H."/>
            <person name="Chalk A.M."/>
            <person name="Chiu K.P."/>
            <person name="Choudhary V."/>
            <person name="Christoffels A."/>
            <person name="Clutterbuck D.R."/>
            <person name="Crowe M.L."/>
            <person name="Dalla E."/>
            <person name="Dalrymple B.P."/>
            <person name="de Bono B."/>
            <person name="Della Gatta G."/>
            <person name="di Bernardo D."/>
            <person name="Down T."/>
            <person name="Engstrom P."/>
            <person name="Fagiolini M."/>
            <person name="Faulkner G."/>
            <person name="Fletcher C.F."/>
            <person name="Fukushima T."/>
            <person name="Furuno M."/>
            <person name="Futaki S."/>
            <person name="Gariboldi M."/>
            <person name="Georgii-Hemming P."/>
            <person name="Gingeras T.R."/>
            <person name="Gojobori T."/>
            <person name="Green R.E."/>
            <person name="Gustincich S."/>
            <person name="Harbers M."/>
            <person name="Hayashi Y."/>
            <person name="Hensch T.K."/>
            <person name="Hirokawa N."/>
            <person name="Hill D."/>
            <person name="Huminiecki L."/>
            <person name="Iacono M."/>
            <person name="Ikeo K."/>
            <person name="Iwama A."/>
            <person name="Ishikawa T."/>
            <person name="Jakt M."/>
            <person name="Kanapin A."/>
            <person name="Katoh M."/>
            <person name="Kawasawa Y."/>
            <person name="Kelso J."/>
            <person name="Kitamura H."/>
            <person name="Kitano H."/>
            <person name="Kollias G."/>
            <person name="Krishnan S.P."/>
            <person name="Kruger A."/>
            <person name="Kummerfeld S.K."/>
            <person name="Kurochkin I.V."/>
            <person name="Lareau L.F."/>
            <person name="Lazarevic D."/>
            <person name="Lipovich L."/>
            <person name="Liu J."/>
            <person name="Liuni S."/>
            <person name="McWilliam S."/>
            <person name="Madan Babu M."/>
            <person name="Madera M."/>
            <person name="Marchionni L."/>
            <person name="Matsuda H."/>
            <person name="Matsuzawa S."/>
            <person name="Miki H."/>
            <person name="Mignone F."/>
            <person name="Miyake S."/>
            <person name="Morris K."/>
            <person name="Mottagui-Tabar S."/>
            <person name="Mulder N."/>
            <person name="Nakano N."/>
            <person name="Nakauchi H."/>
            <person name="Ng P."/>
            <person name="Nilsson R."/>
            <person name="Nishiguchi S."/>
            <person name="Nishikawa S."/>
            <person name="Nori F."/>
            <person name="Ohara O."/>
            <person name="Okazaki Y."/>
            <person name="Orlando V."/>
            <person name="Pang K.C."/>
            <person name="Pavan W.J."/>
            <person name="Pavesi G."/>
            <person name="Pesole G."/>
            <person name="Petrovsky N."/>
            <person name="Piazza S."/>
            <person name="Reed J."/>
            <person name="Reid J.F."/>
            <person name="Ring B.Z."/>
            <person name="Ringwald M."/>
            <person name="Rost B."/>
            <person name="Ruan Y."/>
            <person name="Salzberg S.L."/>
            <person name="Sandelin A."/>
            <person name="Schneider C."/>
            <person name="Schoenbach C."/>
            <person name="Sekiguchi K."/>
            <person name="Semple C.A."/>
            <person name="Seno S."/>
            <person name="Sessa L."/>
            <person name="Sheng Y."/>
            <person name="Shibata Y."/>
            <person name="Shimada H."/>
            <person name="Shimada K."/>
            <person name="Silva D."/>
            <person name="Sinclair B."/>
            <person name="Sperling S."/>
            <person name="Stupka E."/>
            <person name="Sugiura K."/>
            <person name="Sultana R."/>
            <person name="Takenaka Y."/>
            <person name="Taki K."/>
            <person name="Tammoja K."/>
            <person name="Tan S.L."/>
            <person name="Tang S."/>
            <person name="Taylor M.S."/>
            <person name="Tegner J."/>
            <person name="Teichmann S.A."/>
            <person name="Ueda H.R."/>
            <person name="van Nimwegen E."/>
            <person name="Verardo R."/>
            <person name="Wei C.L."/>
            <person name="Yagi K."/>
            <person name="Yamanishi H."/>
            <person name="Zabarovsky E."/>
            <person name="Zhu S."/>
            <person name="Zimmer A."/>
            <person name="Hide W."/>
            <person name="Bult C."/>
            <person name="Grimmond S.M."/>
            <person name="Teasdale R.D."/>
            <person name="Liu E.T."/>
            <person name="Brusic V."/>
            <person name="Quackenbush J."/>
            <person name="Wahlestedt C."/>
            <person name="Mattick J.S."/>
            <person name="Hume D.A."/>
            <person name="Kai C."/>
            <person name="Sasaki D."/>
            <person name="Tomaru Y."/>
            <person name="Fukuda S."/>
            <person name="Kanamori-Katayama M."/>
            <person name="Suzuki M."/>
            <person name="Aoki J."/>
            <person name="Arakawa T."/>
            <person name="Iida J."/>
            <person name="Imamura K."/>
            <person name="Itoh M."/>
            <person name="Kato T."/>
            <person name="Kawaji H."/>
            <person name="Kawagashira N."/>
            <person name="Kawashima T."/>
            <person name="Kojima M."/>
            <person name="Kondo S."/>
            <person name="Konno H."/>
            <person name="Nakano K."/>
            <person name="Ninomiya N."/>
            <person name="Nishio T."/>
            <person name="Okada M."/>
            <person name="Plessy C."/>
            <person name="Shibata K."/>
            <person name="Shiraki T."/>
            <person name="Suzuki S."/>
            <person name="Tagami M."/>
            <person name="Waki K."/>
            <person name="Watahiki A."/>
            <person name="Okamura-Oho Y."/>
            <person name="Suzuki H."/>
            <person name="Kawai J."/>
            <person name="Hayashizaki Y."/>
        </authorList>
    </citation>
    <scope>NUCLEOTIDE SEQUENCE [LARGE SCALE MRNA]</scope>
    <source>
        <strain>C57BL/6J</strain>
        <tissue>Embryonic stem cell</tissue>
        <tissue>Liver</tissue>
    </source>
</reference>
<reference key="4">
    <citation type="journal article" date="2009" name="PLoS Biol.">
        <title>Lineage-specific biology revealed by a finished genome assembly of the mouse.</title>
        <authorList>
            <person name="Church D.M."/>
            <person name="Goodstadt L."/>
            <person name="Hillier L.W."/>
            <person name="Zody M.C."/>
            <person name="Goldstein S."/>
            <person name="She X."/>
            <person name="Bult C.J."/>
            <person name="Agarwala R."/>
            <person name="Cherry J.L."/>
            <person name="DiCuccio M."/>
            <person name="Hlavina W."/>
            <person name="Kapustin Y."/>
            <person name="Meric P."/>
            <person name="Maglott D."/>
            <person name="Birtle Z."/>
            <person name="Marques A.C."/>
            <person name="Graves T."/>
            <person name="Zhou S."/>
            <person name="Teague B."/>
            <person name="Potamousis K."/>
            <person name="Churas C."/>
            <person name="Place M."/>
            <person name="Herschleb J."/>
            <person name="Runnheim R."/>
            <person name="Forrest D."/>
            <person name="Amos-Landgraf J."/>
            <person name="Schwartz D.C."/>
            <person name="Cheng Z."/>
            <person name="Lindblad-Toh K."/>
            <person name="Eichler E.E."/>
            <person name="Ponting C.P."/>
        </authorList>
    </citation>
    <scope>NUCLEOTIDE SEQUENCE [LARGE SCALE GENOMIC DNA]</scope>
    <source>
        <strain>C57BL/6J</strain>
    </source>
</reference>
<reference key="5">
    <citation type="journal article" date="2004" name="Genome Res.">
        <title>The status, quality, and expansion of the NIH full-length cDNA project: the Mammalian Gene Collection (MGC).</title>
        <authorList>
            <consortium name="The MGC Project Team"/>
        </authorList>
    </citation>
    <scope>NUCLEOTIDE SEQUENCE [LARGE SCALE MRNA]</scope>
    <source>
        <strain>C57BL/6J</strain>
        <tissue>Embryonic brain</tissue>
    </source>
</reference>
<reference key="6">
    <citation type="journal article" date="2010" name="Cell">
        <title>A tissue-specific atlas of mouse protein phosphorylation and expression.</title>
        <authorList>
            <person name="Huttlin E.L."/>
            <person name="Jedrychowski M.P."/>
            <person name="Elias J.E."/>
            <person name="Goswami T."/>
            <person name="Rad R."/>
            <person name="Beausoleil S.A."/>
            <person name="Villen J."/>
            <person name="Haas W."/>
            <person name="Sowa M.E."/>
            <person name="Gygi S.P."/>
        </authorList>
    </citation>
    <scope>IDENTIFICATION BY MASS SPECTROMETRY [LARGE SCALE ANALYSIS]</scope>
    <source>
        <tissue>Brain</tissue>
        <tissue>Brown adipose tissue</tissue>
        <tissue>Kidney</tissue>
        <tissue>Liver</tissue>
        <tissue>Lung</tissue>
        <tissue>Pancreas</tissue>
        <tissue>Spleen</tissue>
        <tissue>Testis</tissue>
    </source>
</reference>
<evidence type="ECO:0000250" key="1">
    <source>
        <dbReference type="UniProtKB" id="Q9H553"/>
    </source>
</evidence>
<evidence type="ECO:0000255" key="2"/>
<evidence type="ECO:0000305" key="3"/>
<gene>
    <name type="primary">Alg2</name>
    <name type="ORF">MNCb-5081</name>
</gene>
<accession>Q9DBE8</accession>
<accession>Q7TN30</accession>
<accession>Q9CWI6</accession>
<accession>Q9JJA8</accession>
<feature type="chain" id="PRO_0000080261" description="Alpha-1,3/1,6-mannosyltransferase ALG2">
    <location>
        <begin position="1"/>
        <end position="415"/>
    </location>
</feature>
<feature type="topological domain" description="Cytoplasmic" evidence="1">
    <location>
        <begin position="1"/>
        <end position="84"/>
    </location>
</feature>
<feature type="intramembrane region" description="Helical" evidence="2">
    <location>
        <begin position="85"/>
        <end position="105"/>
    </location>
</feature>
<feature type="topological domain" description="Cytoplasmic" evidence="1">
    <location>
        <begin position="106"/>
        <end position="415"/>
    </location>
</feature>
<feature type="sequence conflict" description="In Ref. 3; BAB27106." evidence="3" ref="3">
    <original>H</original>
    <variation>Y</variation>
    <location>
        <position position="296"/>
    </location>
</feature>
<feature type="sequence conflict" description="In Ref. 3; BAB23731." evidence="3" ref="3">
    <original>F</original>
    <variation>L</variation>
    <location>
        <position position="376"/>
    </location>
</feature>
<protein>
    <recommendedName>
        <fullName>Alpha-1,3/1,6-mannosyltransferase ALG2</fullName>
        <ecNumber evidence="1">2.4.1.132</ecNumber>
        <ecNumber evidence="1">2.4.1.257</ecNumber>
    </recommendedName>
    <alternativeName>
        <fullName>Asparagine-linked glycosylation protein 2 homolog</fullName>
    </alternativeName>
    <alternativeName>
        <fullName>GDP-Man:Man(1)GlcNAc(2)-PP-Dol alpha-1,3-mannosyltransferase</fullName>
    </alternativeName>
    <alternativeName>
        <fullName>GDP-Man:Man(1)GlcNAc(2)-PP-dolichol mannosyltransferase</fullName>
    </alternativeName>
    <alternativeName>
        <fullName>GDP-Man:Man(2)GlcNAc(2)-PP-Dol alpha-1,6-mannosyltransferase</fullName>
    </alternativeName>
</protein>
<comment type="function">
    <text evidence="1">Mannosyltransferase that operates in the biosynthetic pathway of dolichol-linked oligosaccharides, the glycan precursors employed in protein asparagine (N)-glycosylation. The assembly of dolichol-linked oligosaccharides begins on the cytosolic side of the endoplasmic reticulum membrane and finishes in its lumen. The sequential addition of sugars to dolichol pyrophosphate produces dolichol-linked oligosaccharides containing fourteen sugars, including two GlcNAcs, nine mannoses and three glucoses. Once assembled, the oligosaccharide is transferred from the lipid to nascent proteins by oligosaccharyltransferases. Catalyzes, on the cytoplasmic face of the endoplasmic reticulum, the addition of the second and third mannose residues to the dolichol-linked oligosaccharide chain, to produce Man3GlcNAc(2)-PP-dolichol core oligosaccharide. Man3GlcNAc(2)-PP-dolichol is a substrate for ALG11, the following enzyme in the biosynthetic pathway. While both alpha 1,3 and alpha 1,6 linkages are possible, the sequential addition of alpha 1,3 followed by alpha 1,6 is probably the preferred route.</text>
</comment>
<comment type="catalytic activity">
    <reaction evidence="1">
        <text>a beta-D-Man-(1-&gt;4)-beta-D-GlcNAc-(1-&gt;4)-alpha-D-GlcNAc-diphospho-di-trans,poly-cis-dolichol + GDP-alpha-D-mannose = an alpha-D-Man-(1-&gt;3)-beta-D-Man-(1-&gt;4)-beta-D-GlcNAc-(1-&gt;4)-alpha-D-GlcNAc-diphospho-di-trans,poly-cis-dolichol + GDP + H(+)</text>
        <dbReference type="Rhea" id="RHEA:29515"/>
        <dbReference type="Rhea" id="RHEA-COMP:19511"/>
        <dbReference type="Rhea" id="RHEA-COMP:19513"/>
        <dbReference type="ChEBI" id="CHEBI:15378"/>
        <dbReference type="ChEBI" id="CHEBI:57527"/>
        <dbReference type="ChEBI" id="CHEBI:58189"/>
        <dbReference type="ChEBI" id="CHEBI:58472"/>
        <dbReference type="ChEBI" id="CHEBI:132510"/>
        <dbReference type="EC" id="2.4.1.132"/>
    </reaction>
    <physiologicalReaction direction="left-to-right" evidence="1">
        <dbReference type="Rhea" id="RHEA:29516"/>
    </physiologicalReaction>
</comment>
<comment type="catalytic activity">
    <reaction evidence="1">
        <text>an alpha-D-Man-(1-&gt;3)-beta-D-Man-(1-&gt;4)-beta-D-GlcNAc-(1-&gt;4)-alpha-D-GlcNAc-diphospho-di-trans,poly-cis-dolichol + GDP-alpha-D-mannose = an alpha-D-Man-(1-&gt;3)-[alpha-D-Man-(1-&gt;6)]-beta-D-Man-(1-&gt;4)-beta-D-GlcNAc-(1-&gt;4)-alpha-D-GlcNAc-diphospho-di-trans,poly-cis-dolichol + GDP + H(+)</text>
        <dbReference type="Rhea" id="RHEA:29519"/>
        <dbReference type="Rhea" id="RHEA-COMP:19513"/>
        <dbReference type="Rhea" id="RHEA-COMP:19515"/>
        <dbReference type="ChEBI" id="CHEBI:15378"/>
        <dbReference type="ChEBI" id="CHEBI:57527"/>
        <dbReference type="ChEBI" id="CHEBI:58189"/>
        <dbReference type="ChEBI" id="CHEBI:132510"/>
        <dbReference type="ChEBI" id="CHEBI:132511"/>
        <dbReference type="EC" id="2.4.1.257"/>
    </reaction>
    <physiologicalReaction direction="left-to-right" evidence="1">
        <dbReference type="Rhea" id="RHEA:29520"/>
    </physiologicalReaction>
</comment>
<comment type="catalytic activity">
    <reaction evidence="1">
        <text>a beta-D-Man-(1-&gt;4)-beta-D-GlcNAc-(1-&gt;4)-alpha-D-GlcNAc-diphospho-di-trans,poly-cis-dolichol + GDP-alpha-D-mannose = an alpha-D-Man-(1-&gt;6)-beta-D-Man-(1-&gt;4)-beta-D-GlcNAc-(1-&gt;4)-alpha-D-GlcNAc-diphospho-di-trans,poly-cis-dolichol + GDP + H(+)</text>
        <dbReference type="Rhea" id="RHEA:79023"/>
        <dbReference type="Rhea" id="RHEA-COMP:19511"/>
        <dbReference type="Rhea" id="RHEA-COMP:19514"/>
        <dbReference type="ChEBI" id="CHEBI:15378"/>
        <dbReference type="ChEBI" id="CHEBI:57527"/>
        <dbReference type="ChEBI" id="CHEBI:58189"/>
        <dbReference type="ChEBI" id="CHEBI:58472"/>
        <dbReference type="ChEBI" id="CHEBI:229641"/>
    </reaction>
    <physiologicalReaction direction="left-to-right" evidence="1">
        <dbReference type="Rhea" id="RHEA:79024"/>
    </physiologicalReaction>
</comment>
<comment type="catalytic activity">
    <reaction evidence="1">
        <text>an alpha-D-Man-(1-&gt;6)-beta-D-Man-(1-&gt;4)-beta-D-GlcNAc-(1-&gt;4)-alpha-D-GlcNAc-diphospho-di-trans,poly-cis-dolichol + GDP-alpha-D-mannose = an alpha-D-Man-(1-&gt;3)-[alpha-D-Man-(1-&gt;6)]-beta-D-Man-(1-&gt;4)-beta-D-GlcNAc-(1-&gt;4)-alpha-D-GlcNAc-diphospho-di-trans,poly-cis-dolichol + GDP + H(+)</text>
        <dbReference type="Rhea" id="RHEA:79027"/>
        <dbReference type="Rhea" id="RHEA-COMP:19514"/>
        <dbReference type="Rhea" id="RHEA-COMP:19515"/>
        <dbReference type="ChEBI" id="CHEBI:15378"/>
        <dbReference type="ChEBI" id="CHEBI:57527"/>
        <dbReference type="ChEBI" id="CHEBI:58189"/>
        <dbReference type="ChEBI" id="CHEBI:132511"/>
        <dbReference type="ChEBI" id="CHEBI:229641"/>
    </reaction>
    <physiologicalReaction direction="left-to-right" evidence="1">
        <dbReference type="Rhea" id="RHEA:79028"/>
    </physiologicalReaction>
</comment>
<comment type="pathway">
    <text evidence="1">Protein modification; protein glycosylation.</text>
</comment>
<comment type="subcellular location">
    <subcellularLocation>
        <location evidence="1">Endoplasmic reticulum membrane</location>
        <topology evidence="1">Single-pass membrane protein</topology>
    </subcellularLocation>
    <text evidence="1">Active on cytoplasmic side of endoplasmic reticulum membrane.</text>
</comment>
<comment type="similarity">
    <text evidence="3">Belongs to the glycosyltransferase group 1 family. Glycosyltransferase 4 subfamily.</text>
</comment>
<proteinExistence type="evidence at protein level"/>
<dbReference type="EC" id="2.4.1.132" evidence="1"/>
<dbReference type="EC" id="2.4.1.257" evidence="1"/>
<dbReference type="EMBL" id="AB161357">
    <property type="protein sequence ID" value="BAD11906.1"/>
    <property type="molecule type" value="mRNA"/>
</dbReference>
<dbReference type="EMBL" id="AB041604">
    <property type="protein sequence ID" value="BAA95087.1"/>
    <property type="molecule type" value="mRNA"/>
</dbReference>
<dbReference type="EMBL" id="AK004997">
    <property type="protein sequence ID" value="BAB23731.1"/>
    <property type="molecule type" value="mRNA"/>
</dbReference>
<dbReference type="EMBL" id="AK010673">
    <property type="protein sequence ID" value="BAB27106.1"/>
    <property type="molecule type" value="mRNA"/>
</dbReference>
<dbReference type="EMBL" id="AL772150">
    <property type="status" value="NOT_ANNOTATED_CDS"/>
    <property type="molecule type" value="Genomic_DNA"/>
</dbReference>
<dbReference type="EMBL" id="BC051951">
    <property type="protein sequence ID" value="AAH51951.1"/>
    <property type="molecule type" value="mRNA"/>
</dbReference>
<dbReference type="EMBL" id="BC052411">
    <property type="protein sequence ID" value="AAH52411.2"/>
    <property type="molecule type" value="mRNA"/>
</dbReference>
<dbReference type="CCDS" id="CCDS18161.1"/>
<dbReference type="RefSeq" id="NP_064382.3">
    <property type="nucleotide sequence ID" value="NM_019998.3"/>
</dbReference>
<dbReference type="SMR" id="Q9DBE8"/>
<dbReference type="BioGRID" id="208151">
    <property type="interactions" value="6"/>
</dbReference>
<dbReference type="FunCoup" id="Q9DBE8">
    <property type="interactions" value="4282"/>
</dbReference>
<dbReference type="STRING" id="10090.ENSMUSP00000043580"/>
<dbReference type="CAZy" id="GT4">
    <property type="family name" value="Glycosyltransferase Family 4"/>
</dbReference>
<dbReference type="GlyGen" id="Q9DBE8">
    <property type="glycosylation" value="1 site, 1 O-linked glycan (1 site)"/>
</dbReference>
<dbReference type="iPTMnet" id="Q9DBE8"/>
<dbReference type="PhosphoSitePlus" id="Q9DBE8"/>
<dbReference type="SwissPalm" id="Q9DBE8"/>
<dbReference type="jPOST" id="Q9DBE8"/>
<dbReference type="PaxDb" id="10090-ENSMUSP00000043580"/>
<dbReference type="PeptideAtlas" id="Q9DBE8"/>
<dbReference type="ProteomicsDB" id="296019"/>
<dbReference type="Pumba" id="Q9DBE8"/>
<dbReference type="Antibodypedia" id="29048">
    <property type="antibodies" value="265 antibodies from 24 providers"/>
</dbReference>
<dbReference type="DNASU" id="56737"/>
<dbReference type="Ensembl" id="ENSMUST00000044148.3">
    <property type="protein sequence ID" value="ENSMUSP00000043580.3"/>
    <property type="gene ID" value="ENSMUSG00000039740.7"/>
</dbReference>
<dbReference type="GeneID" id="56737"/>
<dbReference type="KEGG" id="mmu:56737"/>
<dbReference type="UCSC" id="uc008suq.2">
    <property type="organism name" value="mouse"/>
</dbReference>
<dbReference type="AGR" id="MGI:1914731"/>
<dbReference type="CTD" id="85365"/>
<dbReference type="MGI" id="MGI:1914731">
    <property type="gene designation" value="Alg2"/>
</dbReference>
<dbReference type="VEuPathDB" id="HostDB:ENSMUSG00000039740"/>
<dbReference type="eggNOG" id="KOG0853">
    <property type="taxonomic scope" value="Eukaryota"/>
</dbReference>
<dbReference type="GeneTree" id="ENSGT00550000075033"/>
<dbReference type="HOGENOM" id="CLU_030619_1_0_1"/>
<dbReference type="InParanoid" id="Q9DBE8"/>
<dbReference type="OMA" id="AMYMKCP"/>
<dbReference type="OrthoDB" id="448893at2759"/>
<dbReference type="PhylomeDB" id="Q9DBE8"/>
<dbReference type="TreeFam" id="TF106000"/>
<dbReference type="BRENDA" id="2.4.1.132">
    <property type="organism ID" value="3474"/>
</dbReference>
<dbReference type="Reactome" id="R-MMU-446193">
    <property type="pathway name" value="Biosynthesis of the N-glycan precursor (dolichol lipid-linked oligosaccharide, LLO) and transfer to a nascent protein"/>
</dbReference>
<dbReference type="UniPathway" id="UPA00378"/>
<dbReference type="BioGRID-ORCS" id="56737">
    <property type="hits" value="27 hits in 77 CRISPR screens"/>
</dbReference>
<dbReference type="CD-CODE" id="CE726F99">
    <property type="entry name" value="Postsynaptic density"/>
</dbReference>
<dbReference type="ChiTaRS" id="Alg2">
    <property type="organism name" value="mouse"/>
</dbReference>
<dbReference type="PRO" id="PR:Q9DBE8"/>
<dbReference type="Proteomes" id="UP000000589">
    <property type="component" value="Chromosome 4"/>
</dbReference>
<dbReference type="RNAct" id="Q9DBE8">
    <property type="molecule type" value="protein"/>
</dbReference>
<dbReference type="Bgee" id="ENSMUSG00000039740">
    <property type="expression patterns" value="Expressed in median eminence of neurohypophysis and 259 other cell types or tissues"/>
</dbReference>
<dbReference type="ExpressionAtlas" id="Q9DBE8">
    <property type="expression patterns" value="baseline and differential"/>
</dbReference>
<dbReference type="GO" id="GO:0098554">
    <property type="term" value="C:cytoplasmic side of endoplasmic reticulum membrane"/>
    <property type="evidence" value="ECO:0000250"/>
    <property type="project" value="UniProtKB"/>
</dbReference>
<dbReference type="GO" id="GO:0004378">
    <property type="term" value="F:GDP-Man:Man1GlcNAc2-PP-Dol alpha-1,3-mannosyltransferase activity"/>
    <property type="evidence" value="ECO:0000250"/>
    <property type="project" value="UniProtKB"/>
</dbReference>
<dbReference type="GO" id="GO:0102704">
    <property type="term" value="F:GDP-Man:Man2GlcNAc2-PP-dolichol alpha-1,6-mannosyltransferase activity"/>
    <property type="evidence" value="ECO:0000250"/>
    <property type="project" value="UniProtKB"/>
</dbReference>
<dbReference type="GO" id="GO:0006488">
    <property type="term" value="P:dolichol-linked oligosaccharide biosynthetic process"/>
    <property type="evidence" value="ECO:0000250"/>
    <property type="project" value="UniProtKB"/>
</dbReference>
<dbReference type="GO" id="GO:0006487">
    <property type="term" value="P:protein N-linked glycosylation"/>
    <property type="evidence" value="ECO:0000250"/>
    <property type="project" value="UniProtKB"/>
</dbReference>
<dbReference type="CDD" id="cd03805">
    <property type="entry name" value="GT4_ALG2-like"/>
    <property type="match status" value="1"/>
</dbReference>
<dbReference type="FunFam" id="3.40.50.2000:FF:000085">
    <property type="entry name" value="alpha-1,3/1,6-mannosyltransferase ALG2"/>
    <property type="match status" value="1"/>
</dbReference>
<dbReference type="FunFam" id="3.40.50.2000:FF:000097">
    <property type="entry name" value="alpha-1,3/1,6-mannosyltransferase ALG2"/>
    <property type="match status" value="1"/>
</dbReference>
<dbReference type="Gene3D" id="3.40.50.2000">
    <property type="entry name" value="Glycogen Phosphorylase B"/>
    <property type="match status" value="2"/>
</dbReference>
<dbReference type="InterPro" id="IPR027054">
    <property type="entry name" value="ALG2"/>
</dbReference>
<dbReference type="InterPro" id="IPR001296">
    <property type="entry name" value="Glyco_trans_1"/>
</dbReference>
<dbReference type="InterPro" id="IPR028098">
    <property type="entry name" value="Glyco_trans_4-like_N"/>
</dbReference>
<dbReference type="PANTHER" id="PTHR45918">
    <property type="entry name" value="ALPHA-1,3/1,6-MANNOSYLTRANSFERASE ALG2"/>
    <property type="match status" value="1"/>
</dbReference>
<dbReference type="PANTHER" id="PTHR45918:SF1">
    <property type="entry name" value="ALPHA-1,3_1,6-MANNOSYLTRANSFERASE ALG2"/>
    <property type="match status" value="1"/>
</dbReference>
<dbReference type="Pfam" id="PF13439">
    <property type="entry name" value="Glyco_transf_4"/>
    <property type="match status" value="1"/>
</dbReference>
<dbReference type="Pfam" id="PF00534">
    <property type="entry name" value="Glycos_transf_1"/>
    <property type="match status" value="1"/>
</dbReference>
<dbReference type="SUPFAM" id="SSF53756">
    <property type="entry name" value="UDP-Glycosyltransferase/glycogen phosphorylase"/>
    <property type="match status" value="1"/>
</dbReference>
<sequence length="415" mass="47405">MAENLYRARSRVYSPSVLFLHPDMGIGGAERLVLDAALALQEYGCDVKIWTAHYDPNHCFIETRELSVQCAGDWLPRSLGWGGRGAAICSYVRMVFLALYVLFLSGEEFDVVVCDQVSACIPVFKLARRRKRVLFYCHFPDLLLTQRNSALKKFYRAPIDWIEEYTTGMADRILVNSQYTASVFKETFKTLSHRNPDVLYPSLNIGSFDLAIPEKIDDLVPKGKQFLFLSINRYERKKNLPLALRSLVQLRNRLPSQEWDKVHLFMAGGYDDRIPENVEHYKELKKMVQESDLERHVTFLRSFSDRQKISLLHGCLCVLYTPSNEHFGIVPLEAMYMQCPVIAVNNGGPLESIVHKVTGFLCEPDPVHFSEAMEKFIHKPSLKATMGLAGKARVAEKFSADAFADQLYQYVTKLV</sequence>
<organism>
    <name type="scientific">Mus musculus</name>
    <name type="common">Mouse</name>
    <dbReference type="NCBI Taxonomy" id="10090"/>
    <lineage>
        <taxon>Eukaryota</taxon>
        <taxon>Metazoa</taxon>
        <taxon>Chordata</taxon>
        <taxon>Craniata</taxon>
        <taxon>Vertebrata</taxon>
        <taxon>Euteleostomi</taxon>
        <taxon>Mammalia</taxon>
        <taxon>Eutheria</taxon>
        <taxon>Euarchontoglires</taxon>
        <taxon>Glires</taxon>
        <taxon>Rodentia</taxon>
        <taxon>Myomorpha</taxon>
        <taxon>Muroidea</taxon>
        <taxon>Muridae</taxon>
        <taxon>Murinae</taxon>
        <taxon>Mus</taxon>
        <taxon>Mus</taxon>
    </lineage>
</organism>